<name>YBED_SALDC</name>
<sequence length="87" mass="9799">MKTKLNELLEFPTPFTYKVMGQALPELVDQVVEVVQRHAPGDYSPTVKPSSKGNYHSVSITINATHIEQVETLYEELGNIDIVRMVL</sequence>
<dbReference type="EMBL" id="CP001144">
    <property type="protein sequence ID" value="ACH77564.1"/>
    <property type="molecule type" value="Genomic_DNA"/>
</dbReference>
<dbReference type="RefSeq" id="WP_000850547.1">
    <property type="nucleotide sequence ID" value="NC_011205.1"/>
</dbReference>
<dbReference type="SMR" id="B5FMN2"/>
<dbReference type="GeneID" id="83645644"/>
<dbReference type="KEGG" id="sed:SeD_A0738"/>
<dbReference type="HOGENOM" id="CLU_161438_2_1_6"/>
<dbReference type="Proteomes" id="UP000008322">
    <property type="component" value="Chromosome"/>
</dbReference>
<dbReference type="GO" id="GO:0005829">
    <property type="term" value="C:cytosol"/>
    <property type="evidence" value="ECO:0007669"/>
    <property type="project" value="TreeGrafter"/>
</dbReference>
<dbReference type="FunFam" id="3.30.70.260:FF:000002">
    <property type="entry name" value="UPF0250 protein YbeD"/>
    <property type="match status" value="1"/>
</dbReference>
<dbReference type="Gene3D" id="3.30.70.260">
    <property type="match status" value="1"/>
</dbReference>
<dbReference type="HAMAP" id="MF_00659">
    <property type="entry name" value="UPF0250"/>
    <property type="match status" value="1"/>
</dbReference>
<dbReference type="InterPro" id="IPR007454">
    <property type="entry name" value="UPF0250_YbeD-like"/>
</dbReference>
<dbReference type="InterPro" id="IPR027471">
    <property type="entry name" value="YbeD-like_sf"/>
</dbReference>
<dbReference type="NCBIfam" id="NF003447">
    <property type="entry name" value="PRK04998.1"/>
    <property type="match status" value="1"/>
</dbReference>
<dbReference type="PANTHER" id="PTHR38036">
    <property type="entry name" value="UPF0250 PROTEIN YBED"/>
    <property type="match status" value="1"/>
</dbReference>
<dbReference type="PANTHER" id="PTHR38036:SF1">
    <property type="entry name" value="UPF0250 PROTEIN YBED"/>
    <property type="match status" value="1"/>
</dbReference>
<dbReference type="Pfam" id="PF04359">
    <property type="entry name" value="DUF493"/>
    <property type="match status" value="1"/>
</dbReference>
<dbReference type="SUPFAM" id="SSF117991">
    <property type="entry name" value="YbeD/HP0495-like"/>
    <property type="match status" value="1"/>
</dbReference>
<organism>
    <name type="scientific">Salmonella dublin (strain CT_02021853)</name>
    <dbReference type="NCBI Taxonomy" id="439851"/>
    <lineage>
        <taxon>Bacteria</taxon>
        <taxon>Pseudomonadati</taxon>
        <taxon>Pseudomonadota</taxon>
        <taxon>Gammaproteobacteria</taxon>
        <taxon>Enterobacterales</taxon>
        <taxon>Enterobacteriaceae</taxon>
        <taxon>Salmonella</taxon>
    </lineage>
</organism>
<proteinExistence type="inferred from homology"/>
<gene>
    <name evidence="1" type="primary">ybeD</name>
    <name type="ordered locus">SeD_A0738</name>
</gene>
<comment type="similarity">
    <text evidence="1">Belongs to the UPF0250 family.</text>
</comment>
<feature type="chain" id="PRO_1000131254" description="UPF0250 protein YbeD">
    <location>
        <begin position="1"/>
        <end position="87"/>
    </location>
</feature>
<evidence type="ECO:0000255" key="1">
    <source>
        <dbReference type="HAMAP-Rule" id="MF_00659"/>
    </source>
</evidence>
<protein>
    <recommendedName>
        <fullName evidence="1">UPF0250 protein YbeD</fullName>
    </recommendedName>
</protein>
<accession>B5FMN2</accession>
<reference key="1">
    <citation type="journal article" date="2011" name="J. Bacteriol.">
        <title>Comparative genomics of 28 Salmonella enterica isolates: evidence for CRISPR-mediated adaptive sublineage evolution.</title>
        <authorList>
            <person name="Fricke W.F."/>
            <person name="Mammel M.K."/>
            <person name="McDermott P.F."/>
            <person name="Tartera C."/>
            <person name="White D.G."/>
            <person name="Leclerc J.E."/>
            <person name="Ravel J."/>
            <person name="Cebula T.A."/>
        </authorList>
    </citation>
    <scope>NUCLEOTIDE SEQUENCE [LARGE SCALE GENOMIC DNA]</scope>
    <source>
        <strain>CT_02021853</strain>
    </source>
</reference>